<dbReference type="EC" id="2.4.2.17" evidence="1"/>
<dbReference type="EMBL" id="CP000745">
    <property type="protein sequence ID" value="ABR65264.1"/>
    <property type="molecule type" value="Genomic_DNA"/>
</dbReference>
<dbReference type="SMR" id="A6VFN8"/>
<dbReference type="STRING" id="426368.MmarC7_0194"/>
<dbReference type="KEGG" id="mmz:MmarC7_0194"/>
<dbReference type="eggNOG" id="arCOG02208">
    <property type="taxonomic scope" value="Archaea"/>
</dbReference>
<dbReference type="HOGENOM" id="CLU_038115_1_0_2"/>
<dbReference type="OrthoDB" id="33116at2157"/>
<dbReference type="UniPathway" id="UPA00031">
    <property type="reaction ID" value="UER00006"/>
</dbReference>
<dbReference type="GO" id="GO:0005737">
    <property type="term" value="C:cytoplasm"/>
    <property type="evidence" value="ECO:0007669"/>
    <property type="project" value="UniProtKB-SubCell"/>
</dbReference>
<dbReference type="GO" id="GO:0005524">
    <property type="term" value="F:ATP binding"/>
    <property type="evidence" value="ECO:0007669"/>
    <property type="project" value="UniProtKB-KW"/>
</dbReference>
<dbReference type="GO" id="GO:0003879">
    <property type="term" value="F:ATP phosphoribosyltransferase activity"/>
    <property type="evidence" value="ECO:0007669"/>
    <property type="project" value="UniProtKB-UniRule"/>
</dbReference>
<dbReference type="GO" id="GO:0000287">
    <property type="term" value="F:magnesium ion binding"/>
    <property type="evidence" value="ECO:0007669"/>
    <property type="project" value="UniProtKB-UniRule"/>
</dbReference>
<dbReference type="GO" id="GO:0000105">
    <property type="term" value="P:L-histidine biosynthetic process"/>
    <property type="evidence" value="ECO:0007669"/>
    <property type="project" value="UniProtKB-UniRule"/>
</dbReference>
<dbReference type="FunFam" id="3.30.70.120:FF:000002">
    <property type="entry name" value="ATP phosphoribosyltransferase"/>
    <property type="match status" value="1"/>
</dbReference>
<dbReference type="FunFam" id="3.40.190.10:FF:000008">
    <property type="entry name" value="ATP phosphoribosyltransferase"/>
    <property type="match status" value="1"/>
</dbReference>
<dbReference type="Gene3D" id="3.30.70.120">
    <property type="match status" value="1"/>
</dbReference>
<dbReference type="Gene3D" id="3.40.190.10">
    <property type="entry name" value="Periplasmic binding protein-like II"/>
    <property type="match status" value="2"/>
</dbReference>
<dbReference type="HAMAP" id="MF_00079">
    <property type="entry name" value="HisG_Long"/>
    <property type="match status" value="1"/>
</dbReference>
<dbReference type="InterPro" id="IPR020621">
    <property type="entry name" value="ATP-PRT_HisG_long"/>
</dbReference>
<dbReference type="InterPro" id="IPR013820">
    <property type="entry name" value="ATP_PRibTrfase_cat"/>
</dbReference>
<dbReference type="InterPro" id="IPR018198">
    <property type="entry name" value="ATP_PRibTrfase_CS"/>
</dbReference>
<dbReference type="InterPro" id="IPR001348">
    <property type="entry name" value="ATP_PRibTrfase_HisG"/>
</dbReference>
<dbReference type="InterPro" id="IPR013115">
    <property type="entry name" value="HisG_C"/>
</dbReference>
<dbReference type="InterPro" id="IPR011322">
    <property type="entry name" value="N-reg_PII-like_a/b"/>
</dbReference>
<dbReference type="InterPro" id="IPR015867">
    <property type="entry name" value="N-reg_PII/ATP_PRibTrfase_C"/>
</dbReference>
<dbReference type="NCBIfam" id="TIGR00070">
    <property type="entry name" value="hisG"/>
    <property type="match status" value="1"/>
</dbReference>
<dbReference type="NCBIfam" id="TIGR03455">
    <property type="entry name" value="HisG_C-term"/>
    <property type="match status" value="1"/>
</dbReference>
<dbReference type="PANTHER" id="PTHR21403:SF10">
    <property type="entry name" value="ATP PHOSPHORIBOSYLTRANSFERASE"/>
    <property type="match status" value="1"/>
</dbReference>
<dbReference type="PANTHER" id="PTHR21403">
    <property type="entry name" value="ATP PHOSPHORIBOSYLTRANSFERASE ATP-PRTASE"/>
    <property type="match status" value="1"/>
</dbReference>
<dbReference type="Pfam" id="PF01634">
    <property type="entry name" value="HisG"/>
    <property type="match status" value="1"/>
</dbReference>
<dbReference type="Pfam" id="PF08029">
    <property type="entry name" value="HisG_C"/>
    <property type="match status" value="1"/>
</dbReference>
<dbReference type="SUPFAM" id="SSF54913">
    <property type="entry name" value="GlnB-like"/>
    <property type="match status" value="1"/>
</dbReference>
<dbReference type="SUPFAM" id="SSF53850">
    <property type="entry name" value="Periplasmic binding protein-like II"/>
    <property type="match status" value="1"/>
</dbReference>
<dbReference type="PROSITE" id="PS01316">
    <property type="entry name" value="ATP_P_PHORIBOSYLTR"/>
    <property type="match status" value="1"/>
</dbReference>
<organism>
    <name type="scientific">Methanococcus maripaludis (strain C7 / ATCC BAA-1331)</name>
    <dbReference type="NCBI Taxonomy" id="426368"/>
    <lineage>
        <taxon>Archaea</taxon>
        <taxon>Methanobacteriati</taxon>
        <taxon>Methanobacteriota</taxon>
        <taxon>Methanomada group</taxon>
        <taxon>Methanococci</taxon>
        <taxon>Methanococcales</taxon>
        <taxon>Methanococcaceae</taxon>
        <taxon>Methanococcus</taxon>
    </lineage>
</organism>
<accession>A6VFN8</accession>
<gene>
    <name evidence="1" type="primary">hisG</name>
    <name type="ordered locus">MmarC7_0194</name>
</gene>
<sequence length="288" mass="31586">MILLALPNKGRISKPVNEILEKAGLKISVHGRSLFAQTVDPEIKVMFARAKDIPEFVRDGVADVGVTGYDLMLERDTEEELEMLLDFKFGNARLVIAAPENSTVNSIKDVKDGMKIATEFPGLTKRYLEKKGLNLEIIELSGATEIAPFIGVSDLICDLTSTGTTLQLNRLKEVENVVSSTTRLVANKKSMEDPEKCAKINQVLSGIKSVLYAQSKRLIMMNAPKDKVSEITSIIPGMGGPTVSEILSNDKMLAINAVIDENKVFETVTNLEMLGARDILVVPIERIL</sequence>
<comment type="function">
    <text evidence="1">Catalyzes the condensation of ATP and 5-phosphoribose 1-diphosphate to form N'-(5'-phosphoribosyl)-ATP (PR-ATP). Has a crucial role in the pathway because the rate of histidine biosynthesis seems to be controlled primarily by regulation of HisG enzymatic activity.</text>
</comment>
<comment type="catalytic activity">
    <reaction evidence="1">
        <text>1-(5-phospho-beta-D-ribosyl)-ATP + diphosphate = 5-phospho-alpha-D-ribose 1-diphosphate + ATP</text>
        <dbReference type="Rhea" id="RHEA:18473"/>
        <dbReference type="ChEBI" id="CHEBI:30616"/>
        <dbReference type="ChEBI" id="CHEBI:33019"/>
        <dbReference type="ChEBI" id="CHEBI:58017"/>
        <dbReference type="ChEBI" id="CHEBI:73183"/>
        <dbReference type="EC" id="2.4.2.17"/>
    </reaction>
</comment>
<comment type="cofactor">
    <cofactor evidence="1">
        <name>Mg(2+)</name>
        <dbReference type="ChEBI" id="CHEBI:18420"/>
    </cofactor>
</comment>
<comment type="activity regulation">
    <text evidence="1">Feedback inhibited by histidine.</text>
</comment>
<comment type="pathway">
    <text evidence="1">Amino-acid biosynthesis; L-histidine biosynthesis; L-histidine from 5-phospho-alpha-D-ribose 1-diphosphate: step 1/9.</text>
</comment>
<comment type="subcellular location">
    <subcellularLocation>
        <location evidence="1">Cytoplasm</location>
    </subcellularLocation>
</comment>
<comment type="similarity">
    <text evidence="1">Belongs to the ATP phosphoribosyltransferase family. Long subfamily.</text>
</comment>
<evidence type="ECO:0000255" key="1">
    <source>
        <dbReference type="HAMAP-Rule" id="MF_00079"/>
    </source>
</evidence>
<keyword id="KW-0028">Amino-acid biosynthesis</keyword>
<keyword id="KW-0067">ATP-binding</keyword>
<keyword id="KW-0963">Cytoplasm</keyword>
<keyword id="KW-0328">Glycosyltransferase</keyword>
<keyword id="KW-0368">Histidine biosynthesis</keyword>
<keyword id="KW-0460">Magnesium</keyword>
<keyword id="KW-0479">Metal-binding</keyword>
<keyword id="KW-0547">Nucleotide-binding</keyword>
<keyword id="KW-0808">Transferase</keyword>
<name>HIS1_METM7</name>
<proteinExistence type="inferred from homology"/>
<protein>
    <recommendedName>
        <fullName evidence="1">ATP phosphoribosyltransferase</fullName>
        <shortName evidence="1">ATP-PRT</shortName>
        <shortName evidence="1">ATP-PRTase</shortName>
        <ecNumber evidence="1">2.4.2.17</ecNumber>
    </recommendedName>
</protein>
<reference key="1">
    <citation type="submission" date="2007-06" db="EMBL/GenBank/DDBJ databases">
        <title>Complete sequence of Methanococcus maripaludis C7.</title>
        <authorList>
            <consortium name="US DOE Joint Genome Institute"/>
            <person name="Copeland A."/>
            <person name="Lucas S."/>
            <person name="Lapidus A."/>
            <person name="Barry K."/>
            <person name="Glavina del Rio T."/>
            <person name="Dalin E."/>
            <person name="Tice H."/>
            <person name="Pitluck S."/>
            <person name="Clum A."/>
            <person name="Schmutz J."/>
            <person name="Larimer F."/>
            <person name="Land M."/>
            <person name="Hauser L."/>
            <person name="Kyrpides N."/>
            <person name="Anderson I."/>
            <person name="Sieprawska-Lupa M."/>
            <person name="Whitman W.B."/>
            <person name="Richardson P."/>
        </authorList>
    </citation>
    <scope>NUCLEOTIDE SEQUENCE [LARGE SCALE GENOMIC DNA]</scope>
    <source>
        <strain>C7 / ATCC BAA-1331</strain>
    </source>
</reference>
<feature type="chain" id="PRO_1000004473" description="ATP phosphoribosyltransferase">
    <location>
        <begin position="1"/>
        <end position="288"/>
    </location>
</feature>